<name>LIPA_YERP3</name>
<evidence type="ECO:0000255" key="1">
    <source>
        <dbReference type="HAMAP-Rule" id="MF_00206"/>
    </source>
</evidence>
<evidence type="ECO:0000255" key="2">
    <source>
        <dbReference type="PROSITE-ProRule" id="PRU01266"/>
    </source>
</evidence>
<comment type="function">
    <text evidence="1">Catalyzes the radical-mediated insertion of two sulfur atoms into the C-6 and C-8 positions of the octanoyl moiety bound to the lipoyl domains of lipoate-dependent enzymes, thereby converting the octanoylated domains into lipoylated derivatives.</text>
</comment>
<comment type="catalytic activity">
    <reaction evidence="1">
        <text>[[Fe-S] cluster scaffold protein carrying a second [4Fe-4S](2+) cluster] + N(6)-octanoyl-L-lysyl-[protein] + 2 oxidized [2Fe-2S]-[ferredoxin] + 2 S-adenosyl-L-methionine + 4 H(+) = [[Fe-S] cluster scaffold protein] + N(6)-[(R)-dihydrolipoyl]-L-lysyl-[protein] + 4 Fe(3+) + 2 hydrogen sulfide + 2 5'-deoxyadenosine + 2 L-methionine + 2 reduced [2Fe-2S]-[ferredoxin]</text>
        <dbReference type="Rhea" id="RHEA:16585"/>
        <dbReference type="Rhea" id="RHEA-COMP:9928"/>
        <dbReference type="Rhea" id="RHEA-COMP:10000"/>
        <dbReference type="Rhea" id="RHEA-COMP:10001"/>
        <dbReference type="Rhea" id="RHEA-COMP:10475"/>
        <dbReference type="Rhea" id="RHEA-COMP:14568"/>
        <dbReference type="Rhea" id="RHEA-COMP:14569"/>
        <dbReference type="ChEBI" id="CHEBI:15378"/>
        <dbReference type="ChEBI" id="CHEBI:17319"/>
        <dbReference type="ChEBI" id="CHEBI:29034"/>
        <dbReference type="ChEBI" id="CHEBI:29919"/>
        <dbReference type="ChEBI" id="CHEBI:33722"/>
        <dbReference type="ChEBI" id="CHEBI:33737"/>
        <dbReference type="ChEBI" id="CHEBI:33738"/>
        <dbReference type="ChEBI" id="CHEBI:57844"/>
        <dbReference type="ChEBI" id="CHEBI:59789"/>
        <dbReference type="ChEBI" id="CHEBI:78809"/>
        <dbReference type="ChEBI" id="CHEBI:83100"/>
        <dbReference type="EC" id="2.8.1.8"/>
    </reaction>
</comment>
<comment type="cofactor">
    <cofactor evidence="1">
        <name>[4Fe-4S] cluster</name>
        <dbReference type="ChEBI" id="CHEBI:49883"/>
    </cofactor>
    <text evidence="1">Binds 2 [4Fe-4S] clusters per subunit. One cluster is coordinated with 3 cysteines and an exchangeable S-adenosyl-L-methionine.</text>
</comment>
<comment type="pathway">
    <text evidence="1">Protein modification; protein lipoylation via endogenous pathway; protein N(6)-(lipoyl)lysine from octanoyl-[acyl-carrier-protein]: step 2/2.</text>
</comment>
<comment type="subcellular location">
    <subcellularLocation>
        <location evidence="1">Cytoplasm</location>
    </subcellularLocation>
</comment>
<comment type="similarity">
    <text evidence="1">Belongs to the radical SAM superfamily. Lipoyl synthase family.</text>
</comment>
<organism>
    <name type="scientific">Yersinia pseudotuberculosis serotype O:1b (strain IP 31758)</name>
    <dbReference type="NCBI Taxonomy" id="349747"/>
    <lineage>
        <taxon>Bacteria</taxon>
        <taxon>Pseudomonadati</taxon>
        <taxon>Pseudomonadota</taxon>
        <taxon>Gammaproteobacteria</taxon>
        <taxon>Enterobacterales</taxon>
        <taxon>Yersiniaceae</taxon>
        <taxon>Yersinia</taxon>
    </lineage>
</organism>
<protein>
    <recommendedName>
        <fullName evidence="1">Lipoyl synthase</fullName>
        <ecNumber evidence="1">2.8.1.8</ecNumber>
    </recommendedName>
    <alternativeName>
        <fullName evidence="1">Lip-syn</fullName>
        <shortName evidence="1">LS</shortName>
    </alternativeName>
    <alternativeName>
        <fullName evidence="1">Lipoate synthase</fullName>
    </alternativeName>
    <alternativeName>
        <fullName evidence="1">Lipoic acid synthase</fullName>
    </alternativeName>
    <alternativeName>
        <fullName evidence="1">Sulfur insertion protein LipA</fullName>
    </alternativeName>
</protein>
<keyword id="KW-0004">4Fe-4S</keyword>
<keyword id="KW-0963">Cytoplasm</keyword>
<keyword id="KW-0408">Iron</keyword>
<keyword id="KW-0411">Iron-sulfur</keyword>
<keyword id="KW-0479">Metal-binding</keyword>
<keyword id="KW-0949">S-adenosyl-L-methionine</keyword>
<keyword id="KW-0808">Transferase</keyword>
<accession>A7FKY9</accession>
<dbReference type="EC" id="2.8.1.8" evidence="1"/>
<dbReference type="EMBL" id="CP000720">
    <property type="protein sequence ID" value="ABS48859.1"/>
    <property type="molecule type" value="Genomic_DNA"/>
</dbReference>
<dbReference type="RefSeq" id="WP_002210320.1">
    <property type="nucleotide sequence ID" value="NC_009708.1"/>
</dbReference>
<dbReference type="SMR" id="A7FKY9"/>
<dbReference type="GeneID" id="96664611"/>
<dbReference type="KEGG" id="ypi:YpsIP31758_2955"/>
<dbReference type="HOGENOM" id="CLU_033144_2_1_6"/>
<dbReference type="UniPathway" id="UPA00538">
    <property type="reaction ID" value="UER00593"/>
</dbReference>
<dbReference type="Proteomes" id="UP000002412">
    <property type="component" value="Chromosome"/>
</dbReference>
<dbReference type="GO" id="GO:0005737">
    <property type="term" value="C:cytoplasm"/>
    <property type="evidence" value="ECO:0007669"/>
    <property type="project" value="UniProtKB-SubCell"/>
</dbReference>
<dbReference type="GO" id="GO:0051539">
    <property type="term" value="F:4 iron, 4 sulfur cluster binding"/>
    <property type="evidence" value="ECO:0007669"/>
    <property type="project" value="UniProtKB-UniRule"/>
</dbReference>
<dbReference type="GO" id="GO:0016992">
    <property type="term" value="F:lipoate synthase activity"/>
    <property type="evidence" value="ECO:0007669"/>
    <property type="project" value="UniProtKB-UniRule"/>
</dbReference>
<dbReference type="GO" id="GO:0046872">
    <property type="term" value="F:metal ion binding"/>
    <property type="evidence" value="ECO:0007669"/>
    <property type="project" value="UniProtKB-KW"/>
</dbReference>
<dbReference type="CDD" id="cd01335">
    <property type="entry name" value="Radical_SAM"/>
    <property type="match status" value="1"/>
</dbReference>
<dbReference type="FunFam" id="3.20.20.70:FF:000023">
    <property type="entry name" value="Lipoyl synthase"/>
    <property type="match status" value="1"/>
</dbReference>
<dbReference type="Gene3D" id="3.20.20.70">
    <property type="entry name" value="Aldolase class I"/>
    <property type="match status" value="1"/>
</dbReference>
<dbReference type="HAMAP" id="MF_00206">
    <property type="entry name" value="Lipoyl_synth"/>
    <property type="match status" value="1"/>
</dbReference>
<dbReference type="InterPro" id="IPR013785">
    <property type="entry name" value="Aldolase_TIM"/>
</dbReference>
<dbReference type="InterPro" id="IPR006638">
    <property type="entry name" value="Elp3/MiaA/NifB-like_rSAM"/>
</dbReference>
<dbReference type="InterPro" id="IPR031691">
    <property type="entry name" value="LIAS_N"/>
</dbReference>
<dbReference type="InterPro" id="IPR003698">
    <property type="entry name" value="Lipoyl_synth"/>
</dbReference>
<dbReference type="InterPro" id="IPR007197">
    <property type="entry name" value="rSAM"/>
</dbReference>
<dbReference type="NCBIfam" id="TIGR00510">
    <property type="entry name" value="lipA"/>
    <property type="match status" value="1"/>
</dbReference>
<dbReference type="NCBIfam" id="NF004019">
    <property type="entry name" value="PRK05481.1"/>
    <property type="match status" value="1"/>
</dbReference>
<dbReference type="NCBIfam" id="NF009544">
    <property type="entry name" value="PRK12928.1"/>
    <property type="match status" value="1"/>
</dbReference>
<dbReference type="PANTHER" id="PTHR10949">
    <property type="entry name" value="LIPOYL SYNTHASE"/>
    <property type="match status" value="1"/>
</dbReference>
<dbReference type="PANTHER" id="PTHR10949:SF0">
    <property type="entry name" value="LIPOYL SYNTHASE, MITOCHONDRIAL"/>
    <property type="match status" value="1"/>
</dbReference>
<dbReference type="Pfam" id="PF16881">
    <property type="entry name" value="LIAS_N"/>
    <property type="match status" value="1"/>
</dbReference>
<dbReference type="Pfam" id="PF04055">
    <property type="entry name" value="Radical_SAM"/>
    <property type="match status" value="1"/>
</dbReference>
<dbReference type="PIRSF" id="PIRSF005963">
    <property type="entry name" value="Lipoyl_synth"/>
    <property type="match status" value="1"/>
</dbReference>
<dbReference type="SFLD" id="SFLDF00271">
    <property type="entry name" value="lipoyl_synthase"/>
    <property type="match status" value="1"/>
</dbReference>
<dbReference type="SFLD" id="SFLDG01058">
    <property type="entry name" value="lipoyl_synthase_like"/>
    <property type="match status" value="1"/>
</dbReference>
<dbReference type="SMART" id="SM00729">
    <property type="entry name" value="Elp3"/>
    <property type="match status" value="1"/>
</dbReference>
<dbReference type="SUPFAM" id="SSF102114">
    <property type="entry name" value="Radical SAM enzymes"/>
    <property type="match status" value="1"/>
</dbReference>
<dbReference type="PROSITE" id="PS51918">
    <property type="entry name" value="RADICAL_SAM"/>
    <property type="match status" value="1"/>
</dbReference>
<sequence length="321" mass="36086">MSKPIQMERGVKYRDADKMALIPVKNVVTERQELLRKPEWLKIKLPTDSSRIQGIKAAMRKNGLHSVCEEASCPNLSECFNHGTATFMILGAICTRRCPFCDVAHGRPVTPDANEPEKLAQTIQDMGLRYVVITSVDRDDLRDGGAQHFADCISAIRAKNPTIKIETLVPDFRGRMDRALDILTATPPDVFNHNLENVPRVYRQVRPGANYDWSLKLLERFKEAHPDIPTKSGLMVGLGETNAEIVEVMHDLRRHGVTMLTLGQYLQPSRHHLPVQRYVSPAEFDEMKAEAMAMGFTHAACGPFVRSSYHADLQAKGMEVK</sequence>
<feature type="chain" id="PRO_1000058580" description="Lipoyl synthase">
    <location>
        <begin position="1"/>
        <end position="321"/>
    </location>
</feature>
<feature type="domain" description="Radical SAM core" evidence="2">
    <location>
        <begin position="80"/>
        <end position="297"/>
    </location>
</feature>
<feature type="binding site" evidence="1">
    <location>
        <position position="68"/>
    </location>
    <ligand>
        <name>[4Fe-4S] cluster</name>
        <dbReference type="ChEBI" id="CHEBI:49883"/>
        <label>1</label>
    </ligand>
</feature>
<feature type="binding site" evidence="1">
    <location>
        <position position="73"/>
    </location>
    <ligand>
        <name>[4Fe-4S] cluster</name>
        <dbReference type="ChEBI" id="CHEBI:49883"/>
        <label>1</label>
    </ligand>
</feature>
<feature type="binding site" evidence="1">
    <location>
        <position position="79"/>
    </location>
    <ligand>
        <name>[4Fe-4S] cluster</name>
        <dbReference type="ChEBI" id="CHEBI:49883"/>
        <label>1</label>
    </ligand>
</feature>
<feature type="binding site" evidence="1">
    <location>
        <position position="94"/>
    </location>
    <ligand>
        <name>[4Fe-4S] cluster</name>
        <dbReference type="ChEBI" id="CHEBI:49883"/>
        <label>2</label>
        <note>4Fe-4S-S-AdoMet</note>
    </ligand>
</feature>
<feature type="binding site" evidence="1">
    <location>
        <position position="98"/>
    </location>
    <ligand>
        <name>[4Fe-4S] cluster</name>
        <dbReference type="ChEBI" id="CHEBI:49883"/>
        <label>2</label>
        <note>4Fe-4S-S-AdoMet</note>
    </ligand>
</feature>
<feature type="binding site" evidence="1">
    <location>
        <position position="101"/>
    </location>
    <ligand>
        <name>[4Fe-4S] cluster</name>
        <dbReference type="ChEBI" id="CHEBI:49883"/>
        <label>2</label>
        <note>4Fe-4S-S-AdoMet</note>
    </ligand>
</feature>
<feature type="binding site" evidence="1">
    <location>
        <position position="308"/>
    </location>
    <ligand>
        <name>[4Fe-4S] cluster</name>
        <dbReference type="ChEBI" id="CHEBI:49883"/>
        <label>1</label>
    </ligand>
</feature>
<proteinExistence type="inferred from homology"/>
<gene>
    <name evidence="1" type="primary">lipA</name>
    <name type="ordered locus">YpsIP31758_2955</name>
</gene>
<reference key="1">
    <citation type="journal article" date="2007" name="PLoS Genet.">
        <title>The complete genome sequence of Yersinia pseudotuberculosis IP31758, the causative agent of Far East scarlet-like fever.</title>
        <authorList>
            <person name="Eppinger M."/>
            <person name="Rosovitz M.J."/>
            <person name="Fricke W.F."/>
            <person name="Rasko D.A."/>
            <person name="Kokorina G."/>
            <person name="Fayolle C."/>
            <person name="Lindler L.E."/>
            <person name="Carniel E."/>
            <person name="Ravel J."/>
        </authorList>
    </citation>
    <scope>NUCLEOTIDE SEQUENCE [LARGE SCALE GENOMIC DNA]</scope>
    <source>
        <strain>IP 31758</strain>
    </source>
</reference>